<dbReference type="EC" id="5.1.3.32" evidence="1"/>
<dbReference type="EMBL" id="AL590842">
    <property type="protein sequence ID" value="CAL19010.1"/>
    <property type="molecule type" value="Genomic_DNA"/>
</dbReference>
<dbReference type="EMBL" id="AE009952">
    <property type="protein sequence ID" value="AAM84171.1"/>
    <property type="status" value="ALT_INIT"/>
    <property type="molecule type" value="Genomic_DNA"/>
</dbReference>
<dbReference type="EMBL" id="AE017042">
    <property type="protein sequence ID" value="AAS60751.1"/>
    <property type="status" value="ALT_INIT"/>
    <property type="molecule type" value="Genomic_DNA"/>
</dbReference>
<dbReference type="PIR" id="AH0040">
    <property type="entry name" value="AH0040"/>
</dbReference>
<dbReference type="RefSeq" id="WP_002209101.1">
    <property type="nucleotide sequence ID" value="NZ_WUCM01000014.1"/>
</dbReference>
<dbReference type="RefSeq" id="YP_002345406.1">
    <property type="nucleotide sequence ID" value="NC_003143.1"/>
</dbReference>
<dbReference type="SMR" id="Q0WJY2"/>
<dbReference type="IntAct" id="Q0WJY2">
    <property type="interactions" value="5"/>
</dbReference>
<dbReference type="STRING" id="214092.YPO0326"/>
<dbReference type="PaxDb" id="214092-YPO0326"/>
<dbReference type="DNASU" id="1145530"/>
<dbReference type="EnsemblBacteria" id="AAS60751">
    <property type="protein sequence ID" value="AAS60751"/>
    <property type="gene ID" value="YP_0481"/>
</dbReference>
<dbReference type="GeneID" id="57974279"/>
<dbReference type="KEGG" id="ype:YPO0326"/>
<dbReference type="KEGG" id="ypk:y0583"/>
<dbReference type="KEGG" id="ypm:YP_0481"/>
<dbReference type="PATRIC" id="fig|214092.21.peg.563"/>
<dbReference type="eggNOG" id="COG3254">
    <property type="taxonomic scope" value="Bacteria"/>
</dbReference>
<dbReference type="HOGENOM" id="CLU_100689_2_0_6"/>
<dbReference type="OMA" id="WAYMADI"/>
<dbReference type="OrthoDB" id="9799608at2"/>
<dbReference type="UniPathway" id="UPA00125"/>
<dbReference type="Proteomes" id="UP000000815">
    <property type="component" value="Chromosome"/>
</dbReference>
<dbReference type="Proteomes" id="UP000001019">
    <property type="component" value="Chromosome"/>
</dbReference>
<dbReference type="Proteomes" id="UP000002490">
    <property type="component" value="Chromosome"/>
</dbReference>
<dbReference type="GO" id="GO:0005737">
    <property type="term" value="C:cytoplasm"/>
    <property type="evidence" value="ECO:0007669"/>
    <property type="project" value="UniProtKB-SubCell"/>
</dbReference>
<dbReference type="GO" id="GO:0062192">
    <property type="term" value="F:L-rhamnose mutarotase activity"/>
    <property type="evidence" value="ECO:0007669"/>
    <property type="project" value="UniProtKB-EC"/>
</dbReference>
<dbReference type="GO" id="GO:0016857">
    <property type="term" value="F:racemase and epimerase activity, acting on carbohydrates and derivatives"/>
    <property type="evidence" value="ECO:0000318"/>
    <property type="project" value="GO_Central"/>
</dbReference>
<dbReference type="GO" id="GO:0019301">
    <property type="term" value="P:rhamnose catabolic process"/>
    <property type="evidence" value="ECO:0000318"/>
    <property type="project" value="GO_Central"/>
</dbReference>
<dbReference type="Gene3D" id="3.30.70.100">
    <property type="match status" value="1"/>
</dbReference>
<dbReference type="HAMAP" id="MF_01663">
    <property type="entry name" value="L_rham_rotase"/>
    <property type="match status" value="1"/>
</dbReference>
<dbReference type="InterPro" id="IPR011008">
    <property type="entry name" value="Dimeric_a/b-barrel"/>
</dbReference>
<dbReference type="InterPro" id="IPR013448">
    <property type="entry name" value="L-rhamnose_mutarotase"/>
</dbReference>
<dbReference type="InterPro" id="IPR008000">
    <property type="entry name" value="Rham/fucose_mutarotase"/>
</dbReference>
<dbReference type="NCBIfam" id="TIGR02625">
    <property type="entry name" value="YiiL_rotase"/>
    <property type="match status" value="1"/>
</dbReference>
<dbReference type="PANTHER" id="PTHR34389">
    <property type="entry name" value="L-RHAMNOSE MUTAROTASE"/>
    <property type="match status" value="1"/>
</dbReference>
<dbReference type="PANTHER" id="PTHR34389:SF2">
    <property type="entry name" value="L-RHAMNOSE MUTAROTASE"/>
    <property type="match status" value="1"/>
</dbReference>
<dbReference type="Pfam" id="PF05336">
    <property type="entry name" value="rhaM"/>
    <property type="match status" value="1"/>
</dbReference>
<dbReference type="SUPFAM" id="SSF54909">
    <property type="entry name" value="Dimeric alpha+beta barrel"/>
    <property type="match status" value="1"/>
</dbReference>
<gene>
    <name evidence="1" type="primary">rhaM</name>
    <name type="ordered locus">YPO0326</name>
    <name type="ordered locus">y0583</name>
    <name type="ordered locus">YP_0481</name>
</gene>
<reference key="1">
    <citation type="journal article" date="2001" name="Nature">
        <title>Genome sequence of Yersinia pestis, the causative agent of plague.</title>
        <authorList>
            <person name="Parkhill J."/>
            <person name="Wren B.W."/>
            <person name="Thomson N.R."/>
            <person name="Titball R.W."/>
            <person name="Holden M.T.G."/>
            <person name="Prentice M.B."/>
            <person name="Sebaihia M."/>
            <person name="James K.D."/>
            <person name="Churcher C.M."/>
            <person name="Mungall K.L."/>
            <person name="Baker S."/>
            <person name="Basham D."/>
            <person name="Bentley S.D."/>
            <person name="Brooks K."/>
            <person name="Cerdeno-Tarraga A.-M."/>
            <person name="Chillingworth T."/>
            <person name="Cronin A."/>
            <person name="Davies R.M."/>
            <person name="Davis P."/>
            <person name="Dougan G."/>
            <person name="Feltwell T."/>
            <person name="Hamlin N."/>
            <person name="Holroyd S."/>
            <person name="Jagels K."/>
            <person name="Karlyshev A.V."/>
            <person name="Leather S."/>
            <person name="Moule S."/>
            <person name="Oyston P.C.F."/>
            <person name="Quail M.A."/>
            <person name="Rutherford K.M."/>
            <person name="Simmonds M."/>
            <person name="Skelton J."/>
            <person name="Stevens K."/>
            <person name="Whitehead S."/>
            <person name="Barrell B.G."/>
        </authorList>
    </citation>
    <scope>NUCLEOTIDE SEQUENCE [LARGE SCALE GENOMIC DNA]</scope>
    <source>
        <strain>CO-92 / Biovar Orientalis</strain>
    </source>
</reference>
<reference key="2">
    <citation type="journal article" date="2002" name="J. Bacteriol.">
        <title>Genome sequence of Yersinia pestis KIM.</title>
        <authorList>
            <person name="Deng W."/>
            <person name="Burland V."/>
            <person name="Plunkett G. III"/>
            <person name="Boutin A."/>
            <person name="Mayhew G.F."/>
            <person name="Liss P."/>
            <person name="Perna N.T."/>
            <person name="Rose D.J."/>
            <person name="Mau B."/>
            <person name="Zhou S."/>
            <person name="Schwartz D.C."/>
            <person name="Fetherston J.D."/>
            <person name="Lindler L.E."/>
            <person name="Brubaker R.R."/>
            <person name="Plano G.V."/>
            <person name="Straley S.C."/>
            <person name="McDonough K.A."/>
            <person name="Nilles M.L."/>
            <person name="Matson J.S."/>
            <person name="Blattner F.R."/>
            <person name="Perry R.D."/>
        </authorList>
    </citation>
    <scope>NUCLEOTIDE SEQUENCE [LARGE SCALE GENOMIC DNA]</scope>
    <source>
        <strain>KIM10+ / Biovar Mediaevalis</strain>
    </source>
</reference>
<reference key="3">
    <citation type="journal article" date="2004" name="DNA Res.">
        <title>Complete genome sequence of Yersinia pestis strain 91001, an isolate avirulent to humans.</title>
        <authorList>
            <person name="Song Y."/>
            <person name="Tong Z."/>
            <person name="Wang J."/>
            <person name="Wang L."/>
            <person name="Guo Z."/>
            <person name="Han Y."/>
            <person name="Zhang J."/>
            <person name="Pei D."/>
            <person name="Zhou D."/>
            <person name="Qin H."/>
            <person name="Pang X."/>
            <person name="Han Y."/>
            <person name="Zhai J."/>
            <person name="Li M."/>
            <person name="Cui B."/>
            <person name="Qi Z."/>
            <person name="Jin L."/>
            <person name="Dai R."/>
            <person name="Chen F."/>
            <person name="Li S."/>
            <person name="Ye C."/>
            <person name="Du Z."/>
            <person name="Lin W."/>
            <person name="Wang J."/>
            <person name="Yu J."/>
            <person name="Yang H."/>
            <person name="Wang J."/>
            <person name="Huang P."/>
            <person name="Yang R."/>
        </authorList>
    </citation>
    <scope>NUCLEOTIDE SEQUENCE [LARGE SCALE GENOMIC DNA]</scope>
    <source>
        <strain>91001 / Biovar Mediaevalis</strain>
    </source>
</reference>
<proteinExistence type="inferred from homology"/>
<evidence type="ECO:0000255" key="1">
    <source>
        <dbReference type="HAMAP-Rule" id="MF_01663"/>
    </source>
</evidence>
<evidence type="ECO:0000305" key="2"/>
<keyword id="KW-0119">Carbohydrate metabolism</keyword>
<keyword id="KW-0963">Cytoplasm</keyword>
<keyword id="KW-0413">Isomerase</keyword>
<keyword id="KW-1185">Reference proteome</keyword>
<keyword id="KW-0684">Rhamnose metabolism</keyword>
<name>RHAM_YERPE</name>
<feature type="chain" id="PRO_0000344611" description="L-rhamnose mutarotase">
    <location>
        <begin position="1"/>
        <end position="104"/>
    </location>
</feature>
<feature type="active site" description="Proton donor" evidence="1">
    <location>
        <position position="22"/>
    </location>
</feature>
<feature type="binding site" evidence="1">
    <location>
        <position position="18"/>
    </location>
    <ligand>
        <name>substrate</name>
    </ligand>
</feature>
<feature type="binding site" evidence="1">
    <location>
        <position position="41"/>
    </location>
    <ligand>
        <name>substrate</name>
    </ligand>
</feature>
<feature type="binding site" evidence="1">
    <location>
        <begin position="76"/>
        <end position="77"/>
    </location>
    <ligand>
        <name>substrate</name>
    </ligand>
</feature>
<comment type="function">
    <text evidence="1">Involved in the anomeric conversion of L-rhamnose.</text>
</comment>
<comment type="catalytic activity">
    <reaction evidence="1">
        <text>alpha-L-rhamnose = beta-L-rhamnose</text>
        <dbReference type="Rhea" id="RHEA:25584"/>
        <dbReference type="ChEBI" id="CHEBI:27586"/>
        <dbReference type="ChEBI" id="CHEBI:27907"/>
        <dbReference type="EC" id="5.1.3.32"/>
    </reaction>
</comment>
<comment type="pathway">
    <text evidence="1">Carbohydrate metabolism; L-rhamnose metabolism.</text>
</comment>
<comment type="subunit">
    <text evidence="1">Homodimer.</text>
</comment>
<comment type="subcellular location">
    <subcellularLocation>
        <location evidence="1">Cytoplasm</location>
    </subcellularLocation>
</comment>
<comment type="similarity">
    <text evidence="1">Belongs to the rhamnose mutarotase family.</text>
</comment>
<comment type="sequence caution" evidence="2">
    <conflict type="erroneous initiation">
        <sequence resource="EMBL-CDS" id="AAM84171"/>
    </conflict>
</comment>
<comment type="sequence caution" evidence="2">
    <conflict type="erroneous initiation">
        <sequence resource="EMBL-CDS" id="AAS60751"/>
    </conflict>
</comment>
<accession>Q0WJY2</accession>
<accession>Q74XE9</accession>
<accession>Q8D1F1</accession>
<organism>
    <name type="scientific">Yersinia pestis</name>
    <dbReference type="NCBI Taxonomy" id="632"/>
    <lineage>
        <taxon>Bacteria</taxon>
        <taxon>Pseudomonadati</taxon>
        <taxon>Pseudomonadota</taxon>
        <taxon>Gammaproteobacteria</taxon>
        <taxon>Enterobacterales</taxon>
        <taxon>Yersiniaceae</taxon>
        <taxon>Yersinia</taxon>
    </lineage>
</organism>
<sequence length="104" mass="12198">MIRKAFVMAVNPDAHAEYQRRHTPIWPELESVLKAHGAHHYSIFLDETRNLLFGVVEIESEERWNAVAQTAECQRWWQHMADVMPSHPDNSPVSQALREVFYLE</sequence>
<protein>
    <recommendedName>
        <fullName evidence="1">L-rhamnose mutarotase</fullName>
        <ecNumber evidence="1">5.1.3.32</ecNumber>
    </recommendedName>
    <alternativeName>
        <fullName evidence="1">Rhamnose 1-epimerase</fullName>
    </alternativeName>
    <alternativeName>
        <fullName evidence="1">Type-3 mutarotase</fullName>
    </alternativeName>
</protein>